<gene>
    <name type="ordered locus">Rv1086</name>
    <name type="ORF">MTV017.39</name>
</gene>
<keyword id="KW-0002">3D-structure</keyword>
<keyword id="KW-1003">Cell membrane</keyword>
<keyword id="KW-0963">Cytoplasm</keyword>
<keyword id="KW-0460">Magnesium</keyword>
<keyword id="KW-0472">Membrane</keyword>
<keyword id="KW-0479">Metal-binding</keyword>
<keyword id="KW-1185">Reference proteome</keyword>
<keyword id="KW-0808">Transferase</keyword>
<reference key="1">
    <citation type="journal article" date="1998" name="Nature">
        <title>Deciphering the biology of Mycobacterium tuberculosis from the complete genome sequence.</title>
        <authorList>
            <person name="Cole S.T."/>
            <person name="Brosch R."/>
            <person name="Parkhill J."/>
            <person name="Garnier T."/>
            <person name="Churcher C.M."/>
            <person name="Harris D.E."/>
            <person name="Gordon S.V."/>
            <person name="Eiglmeier K."/>
            <person name="Gas S."/>
            <person name="Barry C.E. III"/>
            <person name="Tekaia F."/>
            <person name="Badcock K."/>
            <person name="Basham D."/>
            <person name="Brown D."/>
            <person name="Chillingworth T."/>
            <person name="Connor R."/>
            <person name="Davies R.M."/>
            <person name="Devlin K."/>
            <person name="Feltwell T."/>
            <person name="Gentles S."/>
            <person name="Hamlin N."/>
            <person name="Holroyd S."/>
            <person name="Hornsby T."/>
            <person name="Jagels K."/>
            <person name="Krogh A."/>
            <person name="McLean J."/>
            <person name="Moule S."/>
            <person name="Murphy L.D."/>
            <person name="Oliver S."/>
            <person name="Osborne J."/>
            <person name="Quail M.A."/>
            <person name="Rajandream M.A."/>
            <person name="Rogers J."/>
            <person name="Rutter S."/>
            <person name="Seeger K."/>
            <person name="Skelton S."/>
            <person name="Squares S."/>
            <person name="Squares R."/>
            <person name="Sulston J.E."/>
            <person name="Taylor K."/>
            <person name="Whitehead S."/>
            <person name="Barrell B.G."/>
        </authorList>
    </citation>
    <scope>NUCLEOTIDE SEQUENCE [LARGE SCALE GENOMIC DNA]</scope>
    <source>
        <strain>ATCC 25618 / H37Rv</strain>
    </source>
</reference>
<reference key="2">
    <citation type="journal article" date="2000" name="J. Bacteriol.">
        <title>Polyprenyl phosphate biosynthesis in Mycobacterium tuberculosis and Mycobacterium smegmatis.</title>
        <authorList>
            <person name="Crick D.C."/>
            <person name="Schulbach M.C."/>
            <person name="Zink E.E."/>
            <person name="Macchia M."/>
            <person name="Barontini S."/>
            <person name="Besra G.S."/>
            <person name="Brennan P.J."/>
        </authorList>
    </citation>
    <scope>FUNCTION AS A FARNESYL DIPHOSPHATE SYNTHASE</scope>
    <scope>CATALYTIC ACTIVITY</scope>
    <scope>SUBCELLULAR LOCATION</scope>
</reference>
<reference key="3">
    <citation type="journal article" date="2000" name="J. Biol. Chem.">
        <title>Identification of a short (C15) chain Z-isoprenyl diphosphate synthase and a homologous long (C50) chain isoprenyl diphosphate synthase in Mycobacterium tuberculosis.</title>
        <authorList>
            <person name="Schulbach M.C."/>
            <person name="Brennan P.J."/>
            <person name="Crick D.C."/>
        </authorList>
    </citation>
    <scope>FUNCTION AS A FARNESYL DIPHOSPHATE SYNTHASE</scope>
</reference>
<reference key="4">
    <citation type="journal article" date="2001" name="J. Biol. Chem.">
        <title>Purification, enzymatic characterization, and inhibition of the Z-farnesyl diphosphate synthase from Mycobacterium tuberculosis.</title>
        <authorList>
            <person name="Schulbach M.C."/>
            <person name="Mahapatra S."/>
            <person name="Macchia M."/>
            <person name="Barontini S."/>
            <person name="Papi C."/>
            <person name="Minutolo F."/>
            <person name="Bertini S."/>
            <person name="Brennan P.J."/>
            <person name="Crick D.C."/>
        </authorList>
    </citation>
    <scope>FUNCTION AS FARNESYL DIPHOSPHATE SYNTHASE</scope>
    <scope>BIOPHYSICOCHEMICAL PROPERTIES</scope>
    <scope>ACTIVITY REGULATION</scope>
    <scope>COFACTOR</scope>
</reference>
<reference key="5">
    <citation type="journal article" date="2008" name="Biochem. Biophys. Res. Commun.">
        <title>Product chain-length determination mechanism of Z,E-farnesyl diphosphate synthase.</title>
        <authorList>
            <person name="Noike M."/>
            <person name="Ambo T."/>
            <person name="Kikuchi S."/>
            <person name="Suzuki T."/>
            <person name="Yamashita S."/>
            <person name="Takahashi S."/>
            <person name="Kurokawa H."/>
            <person name="Mahapatra S."/>
            <person name="Crick D.C."/>
            <person name="Koyama T."/>
        </authorList>
    </citation>
    <scope>MUTAGENESIS OF LEU-84</scope>
</reference>
<reference key="6">
    <citation type="journal article" date="2011" name="Mol. Cell. Proteomics">
        <title>Proteogenomic analysis of Mycobacterium tuberculosis by high resolution mass spectrometry.</title>
        <authorList>
            <person name="Kelkar D.S."/>
            <person name="Kumar D."/>
            <person name="Kumar P."/>
            <person name="Balakrishnan L."/>
            <person name="Muthusamy B."/>
            <person name="Yadav A.K."/>
            <person name="Shrivastava P."/>
            <person name="Marimuthu A."/>
            <person name="Anand S."/>
            <person name="Sundaram H."/>
            <person name="Kingsbury R."/>
            <person name="Harsha H.C."/>
            <person name="Nair B."/>
            <person name="Prasad T.S."/>
            <person name="Chauhan D.S."/>
            <person name="Katoch K."/>
            <person name="Katoch V.M."/>
            <person name="Kumar P."/>
            <person name="Chaerkady R."/>
            <person name="Ramachandran S."/>
            <person name="Dash D."/>
            <person name="Pandey A."/>
        </authorList>
    </citation>
    <scope>IDENTIFICATION BY MASS SPECTROMETRY [LARGE SCALE ANALYSIS]</scope>
    <source>
        <strain>ATCC 25618 / H37Rv</strain>
    </source>
</reference>
<reference key="7">
    <citation type="journal article" date="2008" name="J. Mol. Biol.">
        <title>The structural basis of chain length control in Rv1086.</title>
        <authorList>
            <person name="Wang W."/>
            <person name="Dong C."/>
            <person name="McNeil M."/>
            <person name="Kaur D."/>
            <person name="Mahapatra S."/>
            <person name="Crick D.C."/>
            <person name="Naismith J.H."/>
        </authorList>
    </citation>
    <scope>X-RAY CRYSTALLOGRAPHY (1.7 ANGSTROMS) OF 30-256</scope>
    <scope>MUTAGENESIS OF LEU-84 AND VAL-107</scope>
    <scope>SUBUNIT</scope>
</reference>
<comment type="function">
    <text evidence="2 3 4">Catalyzes the condensation of only one isopentenyl pyrophosphate (IPP) unit in the cis configuration to E-geranyl diphosphate (E-GPP) generating the 15 carbon product (2Z,6E)-farnesyl diphosphate (Z-FPP or EZ-FPP). Z-FPP is the precursor of decaprenyl diphosphate, which has a central role in the biosynthesis of the mycobacterial cell wall.</text>
</comment>
<comment type="catalytic activity">
    <reaction evidence="3">
        <text>isopentenyl diphosphate + (2E)-geranyl diphosphate = (2Z,6E)-farnesyl diphosphate + diphosphate</text>
        <dbReference type="Rhea" id="RHEA:23300"/>
        <dbReference type="ChEBI" id="CHEBI:33019"/>
        <dbReference type="ChEBI" id="CHEBI:58057"/>
        <dbReference type="ChEBI" id="CHEBI:128769"/>
        <dbReference type="ChEBI" id="CHEBI:162247"/>
        <dbReference type="EC" id="2.5.1.68"/>
    </reaction>
</comment>
<comment type="cofactor">
    <cofactor evidence="4">
        <name>Mg(2+)</name>
        <dbReference type="ChEBI" id="CHEBI:18420"/>
    </cofactor>
    <text evidence="4">Binds 2 magnesium ions per subunit.</text>
</comment>
<comment type="activity regulation">
    <text evidence="4">Inhibited by citronellyl diphosphate.</text>
</comment>
<comment type="biophysicochemical properties">
    <kinetics>
        <KM evidence="4">16 uM for neryl diphosphate (at pH 7.9 and 37 degrees Celsius)</KM>
        <KM evidence="4">38 uM for E-GPP (at pH 7.9 and 37 degrees Celsius)</KM>
        <KM evidence="4">124 uM for IPP (at pH 7.9 and 37 degrees Celsius)</KM>
        <Vmax evidence="4">4328.0 pmol/min/mg enzyme for IPP (at pH 7.9 and 37 degrees Celsius)</Vmax>
        <Vmax evidence="4">2827.0 pmol/min/mg enzyme for E-GPP (at pH 7.9 and 37 degrees Celsius)</Vmax>
        <Vmax evidence="4">1098.0 pmol/min/mg enzyme for neryl diphosphate (at pH 7.9 and 37 degrees Celsius)</Vmax>
    </kinetics>
    <phDependence>
        <text evidence="4">Optimum pH is between 7 and 8.</text>
    </phDependence>
</comment>
<comment type="subunit">
    <text evidence="5">Homodimer.</text>
</comment>
<comment type="subcellular location">
    <subcellularLocation>
        <location evidence="3">Cytoplasm</location>
    </subcellularLocation>
    <subcellularLocation>
        <location evidence="3">Cell membrane</location>
    </subcellularLocation>
</comment>
<comment type="similarity">
    <text evidence="7">Belongs to the UPP synthase family. Z-FPP synthase subfamily.</text>
</comment>
<accession>P9WFF5</accession>
<accession>L0T8K3</accession>
<accession>O53434</accession>
<evidence type="ECO:0000250" key="1"/>
<evidence type="ECO:0000269" key="2">
    <source>
    </source>
</evidence>
<evidence type="ECO:0000269" key="3">
    <source>
    </source>
</evidence>
<evidence type="ECO:0000269" key="4">
    <source>
    </source>
</evidence>
<evidence type="ECO:0000269" key="5">
    <source>
    </source>
</evidence>
<evidence type="ECO:0000269" key="6">
    <source>
    </source>
</evidence>
<evidence type="ECO:0000305" key="7"/>
<evidence type="ECO:0007829" key="8">
    <source>
        <dbReference type="PDB" id="2VG0"/>
    </source>
</evidence>
<protein>
    <recommendedName>
        <fullName>(2Z,6E)-farnesyl diphosphate synthase</fullName>
        <ecNumber>2.5.1.68</ecNumber>
    </recommendedName>
    <alternativeName>
        <fullName>Short-chain Z-isoprenyl diphosphate synthase</fullName>
    </alternativeName>
    <alternativeName>
        <fullName>Z-FPP synthase</fullName>
        <shortName>Z-FPPS</shortName>
    </alternativeName>
    <alternativeName>
        <fullName>Z-Polyprenyl diphosphate synthase</fullName>
    </alternativeName>
    <alternativeName>
        <fullName>Z-isoprenyl diphosphate synthase</fullName>
    </alternativeName>
</protein>
<dbReference type="EC" id="2.5.1.68"/>
<dbReference type="EMBL" id="AL123456">
    <property type="protein sequence ID" value="CCP43837.1"/>
    <property type="molecule type" value="Genomic_DNA"/>
</dbReference>
<dbReference type="PIR" id="D70895">
    <property type="entry name" value="D70895"/>
</dbReference>
<dbReference type="RefSeq" id="NP_215602.1">
    <property type="nucleotide sequence ID" value="NC_000962.3"/>
</dbReference>
<dbReference type="RefSeq" id="WP_003906511.1">
    <property type="nucleotide sequence ID" value="NZ_NVQJ01000080.1"/>
</dbReference>
<dbReference type="PDB" id="2VFW">
    <property type="method" value="X-ray"/>
    <property type="resolution" value="2.30 A"/>
    <property type="chains" value="A/B=30-256"/>
</dbReference>
<dbReference type="PDB" id="2VG0">
    <property type="method" value="X-ray"/>
    <property type="resolution" value="1.70 A"/>
    <property type="chains" value="A/B=30-256"/>
</dbReference>
<dbReference type="PDB" id="2VG1">
    <property type="method" value="X-ray"/>
    <property type="resolution" value="1.70 A"/>
    <property type="chains" value="A/B=29-256"/>
</dbReference>
<dbReference type="PDBsum" id="2VFW"/>
<dbReference type="PDBsum" id="2VG0"/>
<dbReference type="PDBsum" id="2VG1"/>
<dbReference type="SMR" id="P9WFF5"/>
<dbReference type="FunCoup" id="P9WFF5">
    <property type="interactions" value="95"/>
</dbReference>
<dbReference type="STRING" id="83332.Rv1086"/>
<dbReference type="ChEMBL" id="CHEMBL5465374"/>
<dbReference type="DrugBank" id="DB07780">
    <property type="generic name" value="Farnesyl diphosphate"/>
</dbReference>
<dbReference type="DrugBank" id="DB02552">
    <property type="generic name" value="Geranyl Diphosphate"/>
</dbReference>
<dbReference type="PaxDb" id="83332-Rv1086"/>
<dbReference type="DNASU" id="887097"/>
<dbReference type="GeneID" id="887097"/>
<dbReference type="KEGG" id="mtu:Rv1086"/>
<dbReference type="KEGG" id="mtv:RVBD_1086"/>
<dbReference type="TubercuList" id="Rv1086"/>
<dbReference type="eggNOG" id="COG0020">
    <property type="taxonomic scope" value="Bacteria"/>
</dbReference>
<dbReference type="InParanoid" id="P9WFF5"/>
<dbReference type="OrthoDB" id="4191603at2"/>
<dbReference type="PhylomeDB" id="P9WFF5"/>
<dbReference type="BioCyc" id="MetaCyc:G185E-5248-MONOMER"/>
<dbReference type="BRENDA" id="2.5.1.68">
    <property type="organism ID" value="3445"/>
</dbReference>
<dbReference type="EvolutionaryTrace" id="P9WFF5"/>
<dbReference type="Proteomes" id="UP000001584">
    <property type="component" value="Chromosome"/>
</dbReference>
<dbReference type="GO" id="GO:0005829">
    <property type="term" value="C:cytosol"/>
    <property type="evidence" value="ECO:0000314"/>
    <property type="project" value="UniProtKB"/>
</dbReference>
<dbReference type="GO" id="GO:0005886">
    <property type="term" value="C:plasma membrane"/>
    <property type="evidence" value="ECO:0000314"/>
    <property type="project" value="MTBBASE"/>
</dbReference>
<dbReference type="GO" id="GO:0000287">
    <property type="term" value="F:magnesium ion binding"/>
    <property type="evidence" value="ECO:0000314"/>
    <property type="project" value="MTBBASE"/>
</dbReference>
<dbReference type="GO" id="GO:0030145">
    <property type="term" value="F:manganese ion binding"/>
    <property type="evidence" value="ECO:0000314"/>
    <property type="project" value="MTBBASE"/>
</dbReference>
<dbReference type="GO" id="GO:0004659">
    <property type="term" value="F:prenyltransferase activity"/>
    <property type="evidence" value="ECO:0007669"/>
    <property type="project" value="UniProtKB-UniRule"/>
</dbReference>
<dbReference type="GO" id="GO:0033850">
    <property type="term" value="F:Z-farnesyl diphosphate synthase activity"/>
    <property type="evidence" value="ECO:0000314"/>
    <property type="project" value="UniProtKB"/>
</dbReference>
<dbReference type="GO" id="GO:0016094">
    <property type="term" value="P:polyprenol biosynthetic process"/>
    <property type="evidence" value="ECO:0000314"/>
    <property type="project" value="MTBBASE"/>
</dbReference>
<dbReference type="CDD" id="cd00475">
    <property type="entry name" value="Cis_IPPS"/>
    <property type="match status" value="1"/>
</dbReference>
<dbReference type="FunFam" id="3.40.1180.10:FF:000003">
    <property type="entry name" value="Isoprenyl transferase 2"/>
    <property type="match status" value="1"/>
</dbReference>
<dbReference type="Gene3D" id="3.40.1180.10">
    <property type="entry name" value="Decaprenyl diphosphate synthase-like"/>
    <property type="match status" value="1"/>
</dbReference>
<dbReference type="HAMAP" id="MF_01139">
    <property type="entry name" value="ISPT"/>
    <property type="match status" value="1"/>
</dbReference>
<dbReference type="InterPro" id="IPR001441">
    <property type="entry name" value="UPP_synth-like"/>
</dbReference>
<dbReference type="InterPro" id="IPR018520">
    <property type="entry name" value="UPP_synth-like_CS"/>
</dbReference>
<dbReference type="InterPro" id="IPR036424">
    <property type="entry name" value="UPP_synth-like_sf"/>
</dbReference>
<dbReference type="NCBIfam" id="NF011403">
    <property type="entry name" value="PRK14828.1"/>
    <property type="match status" value="1"/>
</dbReference>
<dbReference type="NCBIfam" id="TIGR00055">
    <property type="entry name" value="uppS"/>
    <property type="match status" value="1"/>
</dbReference>
<dbReference type="PANTHER" id="PTHR10291:SF43">
    <property type="entry name" value="DEHYDRODOLICHYL DIPHOSPHATE SYNTHASE COMPLEX SUBUNIT DHDDS"/>
    <property type="match status" value="1"/>
</dbReference>
<dbReference type="PANTHER" id="PTHR10291">
    <property type="entry name" value="DEHYDRODOLICHYL DIPHOSPHATE SYNTHASE FAMILY MEMBER"/>
    <property type="match status" value="1"/>
</dbReference>
<dbReference type="Pfam" id="PF01255">
    <property type="entry name" value="Prenyltransf"/>
    <property type="match status" value="1"/>
</dbReference>
<dbReference type="SUPFAM" id="SSF64005">
    <property type="entry name" value="Undecaprenyl diphosphate synthase"/>
    <property type="match status" value="1"/>
</dbReference>
<dbReference type="PROSITE" id="PS01066">
    <property type="entry name" value="UPP_SYNTHASE"/>
    <property type="match status" value="1"/>
</dbReference>
<proteinExistence type="evidence at protein level"/>
<feature type="chain" id="PRO_0000123748" description="(2Z,6E)-farnesyl diphosphate synthase">
    <location>
        <begin position="1"/>
        <end position="262"/>
    </location>
</feature>
<feature type="active site" evidence="1">
    <location>
        <position position="40"/>
    </location>
</feature>
<feature type="active site" description="Proton acceptor">
    <location>
        <position position="89"/>
    </location>
</feature>
<feature type="binding site" evidence="1">
    <location>
        <position position="40"/>
    </location>
    <ligand>
        <name>Mg(2+)</name>
        <dbReference type="ChEBI" id="CHEBI:18420"/>
    </ligand>
</feature>
<feature type="binding site">
    <location>
        <begin position="41"/>
        <end position="44"/>
    </location>
    <ligand>
        <name>substrate</name>
    </ligand>
</feature>
<feature type="binding site" evidence="1">
    <location>
        <position position="45"/>
    </location>
    <ligand>
        <name>substrate</name>
    </ligand>
</feature>
<feature type="binding site">
    <location>
        <begin position="86"/>
        <end position="88"/>
    </location>
    <ligand>
        <name>substrate</name>
    </ligand>
</feature>
<feature type="binding site" evidence="1">
    <location>
        <position position="92"/>
    </location>
    <ligand>
        <name>substrate</name>
    </ligand>
</feature>
<feature type="binding site">
    <location>
        <position position="211"/>
    </location>
    <ligand>
        <name>substrate</name>
    </ligand>
</feature>
<feature type="binding site">
    <location>
        <begin position="217"/>
        <end position="219"/>
    </location>
    <ligand>
        <name>substrate</name>
    </ligand>
</feature>
<feature type="binding site" evidence="1">
    <location>
        <position position="230"/>
    </location>
    <ligand>
        <name>Mg(2+)</name>
        <dbReference type="ChEBI" id="CHEBI:18420"/>
    </ligand>
</feature>
<feature type="site" description="Important for determining product length">
    <location>
        <position position="84"/>
    </location>
</feature>
<feature type="mutagenesis site" description="4-fold decrease in affinity relative to the wild-type and able to synthesize prenyl diphosphates containing 20 and 50 carbon atoms when GPP and EE-FPP are used as the allylic substrates, respectively, whereas the wild-type enzyme generates product that is restricted to 15 carbon atoms with GPP as substrate and does not react with EE-FPP; when associated with G-107." evidence="5 6">
    <original>L</original>
    <variation>A</variation>
    <location>
        <position position="84"/>
    </location>
</feature>
<feature type="mutagenesis site" description="No detectable activity. 4-fold decrease in affinity relative to the wild-type and able to synthesize prenyl diphosphates containing 20 and 50 carbon atoms when GPP and EE-FPP are used as the allylic substrates, respectively, whereas the wild-type enzyme generates product that is restricted to 15 carbon atoms with GPP as substrate and does not react with EE-FPP; when associated with A-84." evidence="5">
    <original>V</original>
    <variation>G</variation>
    <location>
        <position position="107"/>
    </location>
</feature>
<feature type="strand" evidence="8">
    <location>
        <begin position="33"/>
        <end position="38"/>
    </location>
</feature>
<feature type="helix" evidence="8">
    <location>
        <begin position="42"/>
        <end position="48"/>
    </location>
</feature>
<feature type="helix" evidence="8">
    <location>
        <begin position="55"/>
        <end position="75"/>
    </location>
</feature>
<feature type="strand" evidence="8">
    <location>
        <begin position="78"/>
        <end position="86"/>
    </location>
</feature>
<feature type="helix" evidence="8">
    <location>
        <begin position="88"/>
        <end position="91"/>
    </location>
</feature>
<feature type="helix" evidence="8">
    <location>
        <begin position="94"/>
        <end position="111"/>
    </location>
</feature>
<feature type="turn" evidence="8">
    <location>
        <begin position="114"/>
        <end position="116"/>
    </location>
</feature>
<feature type="strand" evidence="8">
    <location>
        <begin position="119"/>
        <end position="124"/>
    </location>
</feature>
<feature type="helix" evidence="8">
    <location>
        <begin position="126"/>
        <end position="128"/>
    </location>
</feature>
<feature type="helix" evidence="8">
    <location>
        <begin position="131"/>
        <end position="142"/>
    </location>
</feature>
<feature type="strand" evidence="8">
    <location>
        <begin position="151"/>
        <end position="158"/>
    </location>
</feature>
<feature type="helix" evidence="8">
    <location>
        <begin position="160"/>
        <end position="177"/>
    </location>
</feature>
<feature type="helix" evidence="8">
    <location>
        <begin position="182"/>
        <end position="188"/>
    </location>
</feature>
<feature type="helix" evidence="8">
    <location>
        <begin position="191"/>
        <end position="197"/>
    </location>
</feature>
<feature type="turn" evidence="8">
    <location>
        <begin position="199"/>
        <end position="202"/>
    </location>
</feature>
<feature type="strand" evidence="8">
    <location>
        <begin position="207"/>
        <end position="211"/>
    </location>
</feature>
<feature type="turn" evidence="8">
    <location>
        <begin position="219"/>
        <end position="228"/>
    </location>
</feature>
<feature type="strand" evidence="8">
    <location>
        <begin position="230"/>
        <end position="233"/>
    </location>
</feature>
<feature type="helix" evidence="8">
    <location>
        <begin position="238"/>
        <end position="240"/>
    </location>
</feature>
<feature type="helix" evidence="8">
    <location>
        <begin position="243"/>
        <end position="255"/>
    </location>
</feature>
<sequence>MEIIPPRLKEPLYRLYELRLRQGLAASKSDLPRHIAVLCDGNRRWARSAGYDDVSYGYRMGAAKIAEMLRWCHEAGIELATVYLLSTENLQRDPDELAALIEIITDVVEEICAPANHWSVRTVGDLGLIGEEPARRLRGAVESTPEVASFHVNVAVGYGGRREIVDAVRALLSKELANGATAEELVDAVTVEGISENLYTSGQPDPDLVIRTSGEQRLSGFLLWQSAYSEMWFTEAHWPAFRHVDFLRALRDYSARHRSYGR</sequence>
<name>ZFPP_MYCTU</name>
<organism>
    <name type="scientific">Mycobacterium tuberculosis (strain ATCC 25618 / H37Rv)</name>
    <dbReference type="NCBI Taxonomy" id="83332"/>
    <lineage>
        <taxon>Bacteria</taxon>
        <taxon>Bacillati</taxon>
        <taxon>Actinomycetota</taxon>
        <taxon>Actinomycetes</taxon>
        <taxon>Mycobacteriales</taxon>
        <taxon>Mycobacteriaceae</taxon>
        <taxon>Mycobacterium</taxon>
        <taxon>Mycobacterium tuberculosis complex</taxon>
    </lineage>
</organism>